<organism>
    <name type="scientific">Lolium perenne</name>
    <name type="common">Perennial ryegrass</name>
    <dbReference type="NCBI Taxonomy" id="4522"/>
    <lineage>
        <taxon>Eukaryota</taxon>
        <taxon>Viridiplantae</taxon>
        <taxon>Streptophyta</taxon>
        <taxon>Embryophyta</taxon>
        <taxon>Tracheophyta</taxon>
        <taxon>Spermatophyta</taxon>
        <taxon>Magnoliopsida</taxon>
        <taxon>Liliopsida</taxon>
        <taxon>Poales</taxon>
        <taxon>Poaceae</taxon>
        <taxon>BOP clade</taxon>
        <taxon>Pooideae</taxon>
        <taxon>Poodae</taxon>
        <taxon>Poeae</taxon>
        <taxon>Poeae Chloroplast Group 2 (Poeae type)</taxon>
        <taxon>Loliodinae</taxon>
        <taxon>Loliinae</taxon>
        <taxon>Lolium</taxon>
    </lineage>
</organism>
<dbReference type="EMBL" id="AM777385">
    <property type="protein sequence ID" value="CAO85971.1"/>
    <property type="molecule type" value="Genomic_DNA"/>
</dbReference>
<dbReference type="RefSeq" id="YP_001531278.1">
    <property type="nucleotide sequence ID" value="NC_009950.1"/>
</dbReference>
<dbReference type="SMR" id="A8Y9G5"/>
<dbReference type="GeneID" id="5696595"/>
<dbReference type="KEGG" id="lper:5696595"/>
<dbReference type="GO" id="GO:0009535">
    <property type="term" value="C:chloroplast thylakoid membrane"/>
    <property type="evidence" value="ECO:0007669"/>
    <property type="project" value="UniProtKB-SubCell"/>
</dbReference>
<dbReference type="GO" id="GO:0045259">
    <property type="term" value="C:proton-transporting ATP synthase complex"/>
    <property type="evidence" value="ECO:0007669"/>
    <property type="project" value="UniProtKB-KW"/>
</dbReference>
<dbReference type="GO" id="GO:0033177">
    <property type="term" value="C:proton-transporting two-sector ATPase complex, proton-transporting domain"/>
    <property type="evidence" value="ECO:0007669"/>
    <property type="project" value="InterPro"/>
</dbReference>
<dbReference type="GO" id="GO:0008289">
    <property type="term" value="F:lipid binding"/>
    <property type="evidence" value="ECO:0007669"/>
    <property type="project" value="UniProtKB-KW"/>
</dbReference>
<dbReference type="GO" id="GO:0046933">
    <property type="term" value="F:proton-transporting ATP synthase activity, rotational mechanism"/>
    <property type="evidence" value="ECO:0007669"/>
    <property type="project" value="UniProtKB-UniRule"/>
</dbReference>
<dbReference type="CDD" id="cd18183">
    <property type="entry name" value="ATP-synt_Fo_c_ATPH"/>
    <property type="match status" value="1"/>
</dbReference>
<dbReference type="FunFam" id="1.20.20.10:FF:000001">
    <property type="entry name" value="ATP synthase subunit c, chloroplastic"/>
    <property type="match status" value="1"/>
</dbReference>
<dbReference type="Gene3D" id="1.20.20.10">
    <property type="entry name" value="F1F0 ATP synthase subunit C"/>
    <property type="match status" value="1"/>
</dbReference>
<dbReference type="HAMAP" id="MF_01396">
    <property type="entry name" value="ATP_synth_c_bact"/>
    <property type="match status" value="1"/>
</dbReference>
<dbReference type="InterPro" id="IPR005953">
    <property type="entry name" value="ATP_synth_csu_bac/chlpt"/>
</dbReference>
<dbReference type="InterPro" id="IPR000454">
    <property type="entry name" value="ATP_synth_F0_csu"/>
</dbReference>
<dbReference type="InterPro" id="IPR020537">
    <property type="entry name" value="ATP_synth_F0_csu_DDCD_BS"/>
</dbReference>
<dbReference type="InterPro" id="IPR038662">
    <property type="entry name" value="ATP_synth_F0_csu_sf"/>
</dbReference>
<dbReference type="InterPro" id="IPR002379">
    <property type="entry name" value="ATPase_proteolipid_c-like_dom"/>
</dbReference>
<dbReference type="InterPro" id="IPR035921">
    <property type="entry name" value="F/V-ATP_Csub_sf"/>
</dbReference>
<dbReference type="NCBIfam" id="TIGR01260">
    <property type="entry name" value="ATP_synt_c"/>
    <property type="match status" value="1"/>
</dbReference>
<dbReference type="NCBIfam" id="NF005608">
    <property type="entry name" value="PRK07354.1"/>
    <property type="match status" value="1"/>
</dbReference>
<dbReference type="PANTHER" id="PTHR10031">
    <property type="entry name" value="ATP SYNTHASE LIPID-BINDING PROTEIN, MITOCHONDRIAL"/>
    <property type="match status" value="1"/>
</dbReference>
<dbReference type="PANTHER" id="PTHR10031:SF0">
    <property type="entry name" value="ATPASE PROTEIN 9"/>
    <property type="match status" value="1"/>
</dbReference>
<dbReference type="Pfam" id="PF00137">
    <property type="entry name" value="ATP-synt_C"/>
    <property type="match status" value="1"/>
</dbReference>
<dbReference type="PRINTS" id="PR00124">
    <property type="entry name" value="ATPASEC"/>
</dbReference>
<dbReference type="SUPFAM" id="SSF81333">
    <property type="entry name" value="F1F0 ATP synthase subunit C"/>
    <property type="match status" value="1"/>
</dbReference>
<dbReference type="PROSITE" id="PS00605">
    <property type="entry name" value="ATPASE_C"/>
    <property type="match status" value="1"/>
</dbReference>
<keyword id="KW-0066">ATP synthesis</keyword>
<keyword id="KW-0138">CF(0)</keyword>
<keyword id="KW-0150">Chloroplast</keyword>
<keyword id="KW-0375">Hydrogen ion transport</keyword>
<keyword id="KW-0406">Ion transport</keyword>
<keyword id="KW-0446">Lipid-binding</keyword>
<keyword id="KW-0472">Membrane</keyword>
<keyword id="KW-0934">Plastid</keyword>
<keyword id="KW-0793">Thylakoid</keyword>
<keyword id="KW-0812">Transmembrane</keyword>
<keyword id="KW-1133">Transmembrane helix</keyword>
<keyword id="KW-0813">Transport</keyword>
<sequence length="81" mass="7974">MNPLIAAASVIAAGLAVGLASIGPGVGQGTAAGQAVEGIARQPEAEGKIRGTLLLSLAFMEALTIYGLVVALALLFANPFV</sequence>
<evidence type="ECO:0000255" key="1">
    <source>
        <dbReference type="HAMAP-Rule" id="MF_01396"/>
    </source>
</evidence>
<accession>A8Y9G5</accession>
<feature type="chain" id="PRO_0000362933" description="ATP synthase subunit c, chloroplastic">
    <location>
        <begin position="1"/>
        <end position="81"/>
    </location>
</feature>
<feature type="transmembrane region" description="Helical" evidence="1">
    <location>
        <begin position="3"/>
        <end position="23"/>
    </location>
</feature>
<feature type="transmembrane region" description="Helical" evidence="1">
    <location>
        <begin position="57"/>
        <end position="77"/>
    </location>
</feature>
<feature type="site" description="Reversibly protonated during proton transport" evidence="1">
    <location>
        <position position="61"/>
    </location>
</feature>
<geneLocation type="chloroplast"/>
<reference key="1">
    <citation type="journal article" date="2008" name="PLoS ONE">
        <title>An optimized chloroplast DNA extraction protocol for grasses (Poaceae) proves suitable for whole plastid genome sequencing and SNP detection.</title>
        <authorList>
            <person name="Diekmann K."/>
            <person name="Hodkinson T.R."/>
            <person name="Fricke E."/>
            <person name="Barth S."/>
        </authorList>
    </citation>
    <scope>NUCLEOTIDE SEQUENCE [LARGE SCALE GENOMIC DNA]</scope>
    <source>
        <strain>cv. Cashel</strain>
    </source>
</reference>
<protein>
    <recommendedName>
        <fullName evidence="1">ATP synthase subunit c, chloroplastic</fullName>
    </recommendedName>
    <alternativeName>
        <fullName evidence="1">ATP synthase F(0) sector subunit c</fullName>
    </alternativeName>
    <alternativeName>
        <fullName evidence="1">ATPase subunit III</fullName>
    </alternativeName>
    <alternativeName>
        <fullName evidence="1">F-type ATPase subunit c</fullName>
        <shortName evidence="1">F-ATPase subunit c</shortName>
    </alternativeName>
    <alternativeName>
        <fullName evidence="1">Lipid-binding protein</fullName>
    </alternativeName>
</protein>
<comment type="function">
    <text evidence="1">F(1)F(0) ATP synthase produces ATP from ADP in the presence of a proton or sodium gradient. F-type ATPases consist of two structural domains, F(1) containing the extramembraneous catalytic core and F(0) containing the membrane proton channel, linked together by a central stalk and a peripheral stalk. During catalysis, ATP synthesis in the catalytic domain of F(1) is coupled via a rotary mechanism of the central stalk subunits to proton translocation.</text>
</comment>
<comment type="function">
    <text evidence="1">Key component of the F(0) channel; it plays a direct role in translocation across the membrane. A homomeric c-ring of between 10-14 subunits forms the central stalk rotor element with the F(1) delta and epsilon subunits.</text>
</comment>
<comment type="subunit">
    <text evidence="1">F-type ATPases have 2 components, F(1) - the catalytic core - and F(0) - the membrane proton channel. F(1) has five subunits: alpha(3), beta(3), gamma(1), delta(1), epsilon(1). F(0) has four main subunits: a(1), b(1), b'(1) and c(10-14). The alpha and beta chains form an alternating ring which encloses part of the gamma chain. F(1) is attached to F(0) by a central stalk formed by the gamma and epsilon chains, while a peripheral stalk is formed by the delta, b and b' chains.</text>
</comment>
<comment type="subcellular location">
    <subcellularLocation>
        <location evidence="1">Plastid</location>
        <location evidence="1">Chloroplast thylakoid membrane</location>
        <topology evidence="1">Multi-pass membrane protein</topology>
    </subcellularLocation>
</comment>
<comment type="miscellaneous">
    <text>In plastids the F-type ATPase is also known as CF(1)CF(0).</text>
</comment>
<comment type="similarity">
    <text evidence="1">Belongs to the ATPase C chain family.</text>
</comment>
<proteinExistence type="inferred from homology"/>
<gene>
    <name evidence="1" type="primary">atpH</name>
    <name type="ordered locus">LopeCp028</name>
</gene>
<name>ATPH_LOLPR</name>